<protein>
    <recommendedName>
        <fullName evidence="1">PAN2-PAN3 deadenylation complex catalytic subunit PAN2</fullName>
        <ecNumber evidence="1">3.1.13.4</ecNumber>
    </recommendedName>
    <alternativeName>
        <fullName evidence="1">PAB1P-dependent poly(A)-specific ribonuclease</fullName>
    </alternativeName>
    <alternativeName>
        <fullName evidence="1">Poly(A)-nuclease deadenylation complex subunit 2</fullName>
        <shortName evidence="1">PAN deadenylation complex subunit 2</shortName>
    </alternativeName>
</protein>
<feature type="chain" id="PRO_0000295352" description="PAN2-PAN3 deadenylation complex catalytic subunit PAN2">
    <location>
        <begin position="1"/>
        <end position="1129"/>
    </location>
</feature>
<feature type="repeat" description="WD 1" evidence="1">
    <location>
        <begin position="20"/>
        <end position="60"/>
    </location>
</feature>
<feature type="repeat" description="WD 2" evidence="1">
    <location>
        <begin position="104"/>
        <end position="146"/>
    </location>
</feature>
<feature type="repeat" description="WD 3" evidence="1">
    <location>
        <begin position="148"/>
        <end position="183"/>
    </location>
</feature>
<feature type="repeat" description="WD 4" evidence="1">
    <location>
        <begin position="186"/>
        <end position="226"/>
    </location>
</feature>
<feature type="repeat" description="WD 5" evidence="1">
    <location>
        <begin position="280"/>
        <end position="319"/>
    </location>
</feature>
<feature type="domain" description="USP" evidence="1">
    <location>
        <begin position="458"/>
        <end position="830"/>
    </location>
</feature>
<feature type="domain" description="Exonuclease" evidence="1">
    <location>
        <begin position="880"/>
        <end position="1052"/>
    </location>
</feature>
<feature type="region of interest" description="Linker" evidence="1">
    <location>
        <begin position="320"/>
        <end position="457"/>
    </location>
</feature>
<feature type="region of interest" description="Disordered" evidence="2">
    <location>
        <begin position="396"/>
        <end position="427"/>
    </location>
</feature>
<feature type="region of interest" description="Disordered" evidence="2">
    <location>
        <begin position="1083"/>
        <end position="1129"/>
    </location>
</feature>
<feature type="binding site" evidence="1">
    <location>
        <position position="883"/>
    </location>
    <ligand>
        <name>a divalent metal cation</name>
        <dbReference type="ChEBI" id="CHEBI:60240"/>
        <note>catalytic</note>
    </ligand>
</feature>
<feature type="binding site" evidence="1">
    <location>
        <position position="885"/>
    </location>
    <ligand>
        <name>a divalent metal cation</name>
        <dbReference type="ChEBI" id="CHEBI:60240"/>
        <note>catalytic</note>
    </ligand>
</feature>
<feature type="binding site" evidence="1">
    <location>
        <position position="992"/>
    </location>
    <ligand>
        <name>a divalent metal cation</name>
        <dbReference type="ChEBI" id="CHEBI:60240"/>
        <note>catalytic</note>
    </ligand>
</feature>
<feature type="binding site" evidence="1">
    <location>
        <position position="1045"/>
    </location>
    <ligand>
        <name>a divalent metal cation</name>
        <dbReference type="ChEBI" id="CHEBI:60240"/>
        <note>catalytic</note>
    </ligand>
</feature>
<reference key="1">
    <citation type="journal article" date="2007" name="Plant Cell">
        <title>Dothideomycete-plant interactions illuminated by genome sequencing and EST analysis of the wheat pathogen Stagonospora nodorum.</title>
        <authorList>
            <person name="Hane J.K."/>
            <person name="Lowe R.G.T."/>
            <person name="Solomon P.S."/>
            <person name="Tan K.-C."/>
            <person name="Schoch C.L."/>
            <person name="Spatafora J.W."/>
            <person name="Crous P.W."/>
            <person name="Kodira C.D."/>
            <person name="Birren B.W."/>
            <person name="Galagan J.E."/>
            <person name="Torriani S.F.F."/>
            <person name="McDonald B.A."/>
            <person name="Oliver R.P."/>
        </authorList>
    </citation>
    <scope>NUCLEOTIDE SEQUENCE [LARGE SCALE GENOMIC DNA]</scope>
    <source>
        <strain>SN15 / ATCC MYA-4574 / FGSC 10173</strain>
    </source>
</reference>
<gene>
    <name evidence="1" type="primary">PAN2</name>
    <name type="ORF">SNOG_06299</name>
</gene>
<name>PAN2_PHANO</name>
<sequence length="1129" mass="126472">MEADWNELVTAQLSPPGSHPPAVPISTFAFDTTQELLWTGNNQGRVTSLYGPSLERYTSYRGHATSDGPVKQFLFTDKGVLSISRQSVHYSHRRGLTQWHLTSPDFKDLKCMNFTSKGTREILIAGCQEQMFKVDVEKGIVVDTLPVDAQYTIMKRAGQYLCAATKTGGIHILDSNSLSVIKVFEGHTGSISDMDAKGDFLATCGWSPRQQYAYMLDPFTNVFSLKTLKQLAPVPFHTGAAFVRMHPRMSTTAIIASQNGQMQVIDLMNPDSANLRQLNLYDSYLAGFEMAPSGEAFALADSNSNVHLWGSPAKVHFPEYSNPTEFADHVIPPASMDWSLDTPLNTIGMPYYKETLLSGWPSHMVFEVGAPPPKIDGAILSNMTRTDMGFFAKNPRTKRRNQIEVTRQTDRSSDSLTPPKFLSEKSRASLSLSEANAKAVETMETLTDLHLDDVTRKDVPAMYGNVEIKYSKFGVDDFDFAYYNQTPFSGLETHITNSYANSLLQLFRFTPLIRNLALQHTASPCLFESCLLCELGFLIDMLEKAAGLNCQASNFLKTFSGLSNAVSLNLLEEFAPNVALTSMIQNLNRFLLDKISEEFRQMLPSHGGTSLMDQVLETQARASMRCAQCANETIRGGKNFVNELVYPAKHVMKNTRIPRPTFSQILKASVERQDQTRGWCTKCNRYQQMVQRKTIQSVPGVLMLNAAIQTHEAKLLWSIPNWLPHEIGIIVDQGQFYCFEGQDLKLHLQRGVFDIMVYELVGVVADINSGEHQKPHLVATINTGPSSREPDAEDKWHLFNDFLVRPIPREEALRFEPSWKLPSVLTFQTKSARNKIDDSWKENLDTSILYRWWSSNPTPPDDKFKLLQVSTEAPRPGYPVAIDAEFIRLQAEEIEMKADGTRQTIRPDRKGLARVSVCRGEGEHAGLPFIDDYIAVTEQVVDYLTEWSGISPGDLNRETSPHAPVSLKHAYKKLWLLLNLGCVFVGHSLANDFRTINIHVPRSQVVDTSNLFFLPDFKRKLNLKFLAWCVLKEQIQQDTHDSIEDATTALKLWRKYEEFVDAGVLEPMLNDIYATGSQVKFKAPGSGNRNSMPAGMTATGAGRDTPEPMTTPKKGGAFGGVGFRSPMRR</sequence>
<dbReference type="EC" id="3.1.13.4" evidence="1"/>
<dbReference type="EMBL" id="CH445333">
    <property type="protein sequence ID" value="EAT86130.2"/>
    <property type="status" value="ALT_SEQ"/>
    <property type="molecule type" value="Genomic_DNA"/>
</dbReference>
<dbReference type="RefSeq" id="XP_001796676.1">
    <property type="nucleotide sequence ID" value="XM_001796624.1"/>
</dbReference>
<dbReference type="SMR" id="Q0UPL5"/>
<dbReference type="FunCoup" id="Q0UPL5">
    <property type="interactions" value="642"/>
</dbReference>
<dbReference type="STRING" id="321614.Q0UPL5"/>
<dbReference type="GeneID" id="5973555"/>
<dbReference type="KEGG" id="pno:SNOG_06299"/>
<dbReference type="VEuPathDB" id="FungiDB:JI435_062990"/>
<dbReference type="eggNOG" id="KOG1275">
    <property type="taxonomic scope" value="Eukaryota"/>
</dbReference>
<dbReference type="InParanoid" id="Q0UPL5"/>
<dbReference type="OMA" id="TQELLWT"/>
<dbReference type="OrthoDB" id="16516at2759"/>
<dbReference type="Proteomes" id="UP000001055">
    <property type="component" value="Unassembled WGS sequence"/>
</dbReference>
<dbReference type="GO" id="GO:0000932">
    <property type="term" value="C:P-body"/>
    <property type="evidence" value="ECO:0000318"/>
    <property type="project" value="GO_Central"/>
</dbReference>
<dbReference type="GO" id="GO:0031251">
    <property type="term" value="C:PAN complex"/>
    <property type="evidence" value="ECO:0000318"/>
    <property type="project" value="GO_Central"/>
</dbReference>
<dbReference type="GO" id="GO:0046872">
    <property type="term" value="F:metal ion binding"/>
    <property type="evidence" value="ECO:0007669"/>
    <property type="project" value="UniProtKB-KW"/>
</dbReference>
<dbReference type="GO" id="GO:0003676">
    <property type="term" value="F:nucleic acid binding"/>
    <property type="evidence" value="ECO:0007669"/>
    <property type="project" value="InterPro"/>
</dbReference>
<dbReference type="GO" id="GO:0004535">
    <property type="term" value="F:poly(A)-specific ribonuclease activity"/>
    <property type="evidence" value="ECO:0007669"/>
    <property type="project" value="UniProtKB-UniRule"/>
</dbReference>
<dbReference type="GO" id="GO:0006397">
    <property type="term" value="P:mRNA processing"/>
    <property type="evidence" value="ECO:0007669"/>
    <property type="project" value="UniProtKB-KW"/>
</dbReference>
<dbReference type="GO" id="GO:0000289">
    <property type="term" value="P:nuclear-transcribed mRNA poly(A) tail shortening"/>
    <property type="evidence" value="ECO:0000318"/>
    <property type="project" value="GO_Central"/>
</dbReference>
<dbReference type="CDD" id="cd06143">
    <property type="entry name" value="PAN2_exo"/>
    <property type="match status" value="1"/>
</dbReference>
<dbReference type="CDD" id="cd02672">
    <property type="entry name" value="Peptidase_C19P"/>
    <property type="match status" value="1"/>
</dbReference>
<dbReference type="FunFam" id="2.130.10.10:FF:000459">
    <property type="entry name" value="PAN2-PAN3 deadenylation complex catalytic subunit PAN2"/>
    <property type="match status" value="1"/>
</dbReference>
<dbReference type="FunFam" id="3.30.420.10:FF:000028">
    <property type="entry name" value="PAN2-PAN3 deadenylation complex catalytic subunit PAN2"/>
    <property type="match status" value="1"/>
</dbReference>
<dbReference type="FunFam" id="3.90.70.10:FF:000135">
    <property type="entry name" value="PAN2-PAN3 deadenylation complex catalytic subunit pan2"/>
    <property type="match status" value="1"/>
</dbReference>
<dbReference type="Gene3D" id="3.90.70.10">
    <property type="entry name" value="Cysteine proteinases"/>
    <property type="match status" value="1"/>
</dbReference>
<dbReference type="Gene3D" id="3.30.420.10">
    <property type="entry name" value="Ribonuclease H-like superfamily/Ribonuclease H"/>
    <property type="match status" value="1"/>
</dbReference>
<dbReference type="Gene3D" id="2.130.10.10">
    <property type="entry name" value="YVTN repeat-like/Quinoprotein amine dehydrogenase"/>
    <property type="match status" value="1"/>
</dbReference>
<dbReference type="HAMAP" id="MF_03182">
    <property type="entry name" value="PAN2"/>
    <property type="match status" value="1"/>
</dbReference>
<dbReference type="InterPro" id="IPR013520">
    <property type="entry name" value="Exonuclease_RNaseT/DNA_pol3"/>
</dbReference>
<dbReference type="InterPro" id="IPR030843">
    <property type="entry name" value="PAN2"/>
</dbReference>
<dbReference type="InterPro" id="IPR050785">
    <property type="entry name" value="PAN2-PAN3_catalytic_subunit"/>
</dbReference>
<dbReference type="InterPro" id="IPR048841">
    <property type="entry name" value="PAN2_N"/>
</dbReference>
<dbReference type="InterPro" id="IPR028881">
    <property type="entry name" value="PAN2_UCH_dom"/>
</dbReference>
<dbReference type="InterPro" id="IPR038765">
    <property type="entry name" value="Papain-like_cys_pep_sf"/>
</dbReference>
<dbReference type="InterPro" id="IPR012337">
    <property type="entry name" value="RNaseH-like_sf"/>
</dbReference>
<dbReference type="InterPro" id="IPR036397">
    <property type="entry name" value="RNaseH_sf"/>
</dbReference>
<dbReference type="InterPro" id="IPR028889">
    <property type="entry name" value="USP_dom"/>
</dbReference>
<dbReference type="InterPro" id="IPR015943">
    <property type="entry name" value="WD40/YVTN_repeat-like_dom_sf"/>
</dbReference>
<dbReference type="InterPro" id="IPR036322">
    <property type="entry name" value="WD40_repeat_dom_sf"/>
</dbReference>
<dbReference type="PANTHER" id="PTHR15728">
    <property type="entry name" value="DEADENYLATION COMPLEX CATALYTIC SUBUNIT PAN2"/>
    <property type="match status" value="1"/>
</dbReference>
<dbReference type="PANTHER" id="PTHR15728:SF0">
    <property type="entry name" value="PAN2-PAN3 DEADENYLATION COMPLEX CATALYTIC SUBUNIT PAN2"/>
    <property type="match status" value="1"/>
</dbReference>
<dbReference type="Pfam" id="PF20770">
    <property type="entry name" value="PAN2_N"/>
    <property type="match status" value="1"/>
</dbReference>
<dbReference type="Pfam" id="PF00929">
    <property type="entry name" value="RNase_T"/>
    <property type="match status" value="1"/>
</dbReference>
<dbReference type="Pfam" id="PF13423">
    <property type="entry name" value="UCH_1"/>
    <property type="match status" value="1"/>
</dbReference>
<dbReference type="SMART" id="SM00479">
    <property type="entry name" value="EXOIII"/>
    <property type="match status" value="1"/>
</dbReference>
<dbReference type="SUPFAM" id="SSF54001">
    <property type="entry name" value="Cysteine proteinases"/>
    <property type="match status" value="1"/>
</dbReference>
<dbReference type="SUPFAM" id="SSF53098">
    <property type="entry name" value="Ribonuclease H-like"/>
    <property type="match status" value="1"/>
</dbReference>
<dbReference type="SUPFAM" id="SSF50978">
    <property type="entry name" value="WD40 repeat-like"/>
    <property type="match status" value="1"/>
</dbReference>
<dbReference type="PROSITE" id="PS50235">
    <property type="entry name" value="USP_3"/>
    <property type="match status" value="1"/>
</dbReference>
<keyword id="KW-0963">Cytoplasm</keyword>
<keyword id="KW-0269">Exonuclease</keyword>
<keyword id="KW-0378">Hydrolase</keyword>
<keyword id="KW-0479">Metal-binding</keyword>
<keyword id="KW-0507">mRNA processing</keyword>
<keyword id="KW-0540">Nuclease</keyword>
<keyword id="KW-0677">Repeat</keyword>
<keyword id="KW-0853">WD repeat</keyword>
<evidence type="ECO:0000255" key="1">
    <source>
        <dbReference type="HAMAP-Rule" id="MF_03182"/>
    </source>
</evidence>
<evidence type="ECO:0000256" key="2">
    <source>
        <dbReference type="SAM" id="MobiDB-lite"/>
    </source>
</evidence>
<evidence type="ECO:0000305" key="3"/>
<comment type="function">
    <text evidence="1">Catalytic subunit of the poly(A)-nuclease (PAN) deadenylation complex, one of two cytoplasmic mRNA deadenylases involved in mRNA turnover. PAN specifically shortens poly(A) tails of RNA and the activity is stimulated by poly(A)-binding protein PAB1. PAN deadenylation is followed by rapid degradation of the shortened mRNA tails by the CCR4-NOT complex. Deadenylated mRNAs are then degraded by two alternative mechanisms, namely exosome-mediated 3'-5' exonucleolytic degradation, or deadenylation-dependent mRNA decaping and subsequent 5'-3' exonucleolytic degradation by XRN1. May also be involved in post-transcriptional maturation of mRNA poly(A) tails.</text>
</comment>
<comment type="catalytic activity">
    <reaction evidence="1">
        <text>Exonucleolytic cleavage of poly(A) to 5'-AMP.</text>
        <dbReference type="EC" id="3.1.13.4"/>
    </reaction>
</comment>
<comment type="cofactor">
    <cofactor evidence="1">
        <name>a divalent metal cation</name>
        <dbReference type="ChEBI" id="CHEBI:60240"/>
    </cofactor>
    <text evidence="1">Binds 2 metal cations per subunit in the catalytic exonuclease domain.</text>
</comment>
<comment type="activity regulation">
    <text evidence="1">Positively regulated by the regulatory subunit PAN3.</text>
</comment>
<comment type="subunit">
    <text evidence="1">Forms a heterotrimer with an asymmetric homodimer of the regulatory subunit PAN3 to form the poly(A)-nuclease (PAN) deadenylation complex.</text>
</comment>
<comment type="subcellular location">
    <subcellularLocation>
        <location evidence="1">Cytoplasm</location>
    </subcellularLocation>
</comment>
<comment type="domain">
    <text evidence="1">Contains a pseudo-UCH domain. This ubiquitin C-terminal hydrolase (UCH)-like or ubiquitin specific protease (USP)-like domain is predicted to be catalytically inactive because it lacks the active site catalytic triad characteristic of thiol proteases, with residues at the equivalent structural positions that are incompatible with catalysis, and it cannot bind ubiquitin. It functions as a structural scaffold for intra- and intermolecular interactions in the complex.</text>
</comment>
<comment type="domain">
    <text evidence="1">The linker, or PAN3 interaction domain (PID), between the WD40 repeats and the pseudo-UCH domain mediates interaction with PAN3.</text>
</comment>
<comment type="similarity">
    <text evidence="1">Belongs to the peptidase C19 family. PAN2 subfamily.</text>
</comment>
<comment type="sequence caution" evidence="3">
    <conflict type="erroneous gene model prediction">
        <sequence resource="EMBL-CDS" id="EAT86130"/>
    </conflict>
</comment>
<proteinExistence type="inferred from homology"/>
<accession>Q0UPL5</accession>
<organism>
    <name type="scientific">Phaeosphaeria nodorum (strain SN15 / ATCC MYA-4574 / FGSC 10173)</name>
    <name type="common">Glume blotch fungus</name>
    <name type="synonym">Parastagonospora nodorum</name>
    <dbReference type="NCBI Taxonomy" id="321614"/>
    <lineage>
        <taxon>Eukaryota</taxon>
        <taxon>Fungi</taxon>
        <taxon>Dikarya</taxon>
        <taxon>Ascomycota</taxon>
        <taxon>Pezizomycotina</taxon>
        <taxon>Dothideomycetes</taxon>
        <taxon>Pleosporomycetidae</taxon>
        <taxon>Pleosporales</taxon>
        <taxon>Pleosporineae</taxon>
        <taxon>Phaeosphaeriaceae</taxon>
        <taxon>Parastagonospora</taxon>
    </lineage>
</organism>